<comment type="function">
    <text>Conjugation of reduced glutathione to a wide number of exogenous and endogenous hydrophobic electrophiles.</text>
</comment>
<comment type="catalytic activity">
    <reaction>
        <text>RX + glutathione = an S-substituted glutathione + a halide anion + H(+)</text>
        <dbReference type="Rhea" id="RHEA:16437"/>
        <dbReference type="ChEBI" id="CHEBI:15378"/>
        <dbReference type="ChEBI" id="CHEBI:16042"/>
        <dbReference type="ChEBI" id="CHEBI:17792"/>
        <dbReference type="ChEBI" id="CHEBI:57925"/>
        <dbReference type="ChEBI" id="CHEBI:90779"/>
        <dbReference type="EC" id="2.5.1.18"/>
    </reaction>
</comment>
<comment type="similarity">
    <text evidence="2">Belongs to the GST superfamily. Sigma family.</text>
</comment>
<evidence type="ECO:0000250" key="1">
    <source>
        <dbReference type="UniProtKB" id="O60760"/>
    </source>
</evidence>
<evidence type="ECO:0000305" key="2"/>
<organism>
    <name type="scientific">Ascaris suum</name>
    <name type="common">Pig roundworm</name>
    <name type="synonym">Ascaris lumbricoides</name>
    <dbReference type="NCBI Taxonomy" id="6253"/>
    <lineage>
        <taxon>Eukaryota</taxon>
        <taxon>Metazoa</taxon>
        <taxon>Ecdysozoa</taxon>
        <taxon>Nematoda</taxon>
        <taxon>Chromadorea</taxon>
        <taxon>Rhabditida</taxon>
        <taxon>Spirurina</taxon>
        <taxon>Ascaridomorpha</taxon>
        <taxon>Ascaridoidea</taxon>
        <taxon>Ascarididae</taxon>
        <taxon>Ascaris</taxon>
    </lineage>
</organism>
<proteinExistence type="evidence at protein level"/>
<name>GST2_ASCSU</name>
<sequence>GYKVTYFAIRGLAEPIXLLL</sequence>
<reference key="1">
    <citation type="journal article" date="1994" name="Mol. Biochem. Parasitol.">
        <title>Molecular cloning and expression of a cDNA encoding glutathione S-transferase from Ascaris suum.</title>
        <authorList>
            <person name="Liebau E."/>
            <person name="Schoenberger O.L."/>
            <person name="Walter R.D."/>
            <person name="Henkle-Duehrsen K.J."/>
        </authorList>
    </citation>
    <scope>PROTEIN SEQUENCE</scope>
</reference>
<accession>P48429</accession>
<gene>
    <name type="primary">GST2</name>
</gene>
<keyword id="KW-0903">Direct protein sequencing</keyword>
<keyword id="KW-0808">Transferase</keyword>
<dbReference type="EC" id="2.5.1.18"/>
<dbReference type="GO" id="GO:0004364">
    <property type="term" value="F:glutathione transferase activity"/>
    <property type="evidence" value="ECO:0007669"/>
    <property type="project" value="UniProtKB-EC"/>
</dbReference>
<feature type="chain" id="PRO_0000185924" description="Glutathione S-transferase 2">
    <location>
        <begin position="1"/>
        <end position="20" status="greater than"/>
    </location>
</feature>
<feature type="domain" description="GST N-terminal">
    <location>
        <begin position="1"/>
        <end position="20" status="greater than"/>
    </location>
</feature>
<feature type="binding site" evidence="1">
    <location>
        <position position="6"/>
    </location>
    <ligand>
        <name>glutathione</name>
        <dbReference type="ChEBI" id="CHEBI:57925"/>
    </ligand>
</feature>
<feature type="non-terminal residue">
    <location>
        <position position="20"/>
    </location>
</feature>
<protein>
    <recommendedName>
        <fullName>Glutathione S-transferase 2</fullName>
        <ecNumber>2.5.1.18</ecNumber>
    </recommendedName>
    <alternativeName>
        <fullName>GST class-sigma</fullName>
    </alternativeName>
</protein>